<comment type="function">
    <text evidence="1">Catalyzes a mechanistically unusual reaction, the ATP-dependent insertion of CO2 between the N7 and N8 nitrogen atoms of 7,8-diaminopelargonic acid (DAPA, also called 7,8-diammoniononanoate) to form a ureido ring.</text>
</comment>
<comment type="catalytic activity">
    <reaction evidence="1">
        <text>(7R,8S)-7,8-diammoniononanoate + CO2 + ATP = (4R,5S)-dethiobiotin + ADP + phosphate + 3 H(+)</text>
        <dbReference type="Rhea" id="RHEA:15805"/>
        <dbReference type="ChEBI" id="CHEBI:15378"/>
        <dbReference type="ChEBI" id="CHEBI:16526"/>
        <dbReference type="ChEBI" id="CHEBI:30616"/>
        <dbReference type="ChEBI" id="CHEBI:43474"/>
        <dbReference type="ChEBI" id="CHEBI:149469"/>
        <dbReference type="ChEBI" id="CHEBI:149473"/>
        <dbReference type="ChEBI" id="CHEBI:456216"/>
        <dbReference type="EC" id="6.3.3.3"/>
    </reaction>
</comment>
<comment type="cofactor">
    <cofactor evidence="1">
        <name>Mg(2+)</name>
        <dbReference type="ChEBI" id="CHEBI:18420"/>
    </cofactor>
</comment>
<comment type="pathway">
    <text evidence="1">Cofactor biosynthesis; biotin biosynthesis; biotin from 7,8-diaminononanoate: step 1/2.</text>
</comment>
<comment type="subunit">
    <text evidence="1">Homodimer.</text>
</comment>
<comment type="subcellular location">
    <subcellularLocation>
        <location evidence="1">Cytoplasm</location>
    </subcellularLocation>
</comment>
<comment type="similarity">
    <text evidence="1">Belongs to the dethiobiotin synthetase family.</text>
</comment>
<organism>
    <name type="scientific">Caulobacter vibrioides (strain NA1000 / CB15N)</name>
    <name type="common">Caulobacter crescentus</name>
    <dbReference type="NCBI Taxonomy" id="565050"/>
    <lineage>
        <taxon>Bacteria</taxon>
        <taxon>Pseudomonadati</taxon>
        <taxon>Pseudomonadota</taxon>
        <taxon>Alphaproteobacteria</taxon>
        <taxon>Caulobacterales</taxon>
        <taxon>Caulobacteraceae</taxon>
        <taxon>Caulobacter</taxon>
    </lineage>
</organism>
<dbReference type="EC" id="6.3.3.3" evidence="1"/>
<dbReference type="EMBL" id="CP001340">
    <property type="protein sequence ID" value="ACL95111.1"/>
    <property type="molecule type" value="Genomic_DNA"/>
</dbReference>
<dbReference type="RefSeq" id="WP_010919449.1">
    <property type="nucleotide sequence ID" value="NC_011916.1"/>
</dbReference>
<dbReference type="RefSeq" id="YP_002517019.1">
    <property type="nucleotide sequence ID" value="NC_011916.1"/>
</dbReference>
<dbReference type="SMR" id="B8GVE1"/>
<dbReference type="GeneID" id="7331705"/>
<dbReference type="KEGG" id="ccs:CCNA_01646"/>
<dbReference type="PATRIC" id="fig|565050.3.peg.1622"/>
<dbReference type="HOGENOM" id="CLU_072551_3_1_5"/>
<dbReference type="OrthoDB" id="9802097at2"/>
<dbReference type="PhylomeDB" id="B8GVE1"/>
<dbReference type="UniPathway" id="UPA00078">
    <property type="reaction ID" value="UER00161"/>
</dbReference>
<dbReference type="Proteomes" id="UP000001364">
    <property type="component" value="Chromosome"/>
</dbReference>
<dbReference type="GO" id="GO:0005829">
    <property type="term" value="C:cytosol"/>
    <property type="evidence" value="ECO:0007669"/>
    <property type="project" value="TreeGrafter"/>
</dbReference>
<dbReference type="GO" id="GO:0005524">
    <property type="term" value="F:ATP binding"/>
    <property type="evidence" value="ECO:0007669"/>
    <property type="project" value="UniProtKB-UniRule"/>
</dbReference>
<dbReference type="GO" id="GO:0004141">
    <property type="term" value="F:dethiobiotin synthase activity"/>
    <property type="evidence" value="ECO:0007669"/>
    <property type="project" value="UniProtKB-UniRule"/>
</dbReference>
<dbReference type="GO" id="GO:0000287">
    <property type="term" value="F:magnesium ion binding"/>
    <property type="evidence" value="ECO:0007669"/>
    <property type="project" value="UniProtKB-UniRule"/>
</dbReference>
<dbReference type="GO" id="GO:0009102">
    <property type="term" value="P:biotin biosynthetic process"/>
    <property type="evidence" value="ECO:0007669"/>
    <property type="project" value="UniProtKB-UniRule"/>
</dbReference>
<dbReference type="CDD" id="cd03109">
    <property type="entry name" value="DTBS"/>
    <property type="match status" value="1"/>
</dbReference>
<dbReference type="Gene3D" id="3.40.50.300">
    <property type="entry name" value="P-loop containing nucleotide triphosphate hydrolases"/>
    <property type="match status" value="1"/>
</dbReference>
<dbReference type="HAMAP" id="MF_00336">
    <property type="entry name" value="BioD"/>
    <property type="match status" value="1"/>
</dbReference>
<dbReference type="InterPro" id="IPR004472">
    <property type="entry name" value="DTB_synth_BioD"/>
</dbReference>
<dbReference type="InterPro" id="IPR027417">
    <property type="entry name" value="P-loop_NTPase"/>
</dbReference>
<dbReference type="NCBIfam" id="TIGR00347">
    <property type="entry name" value="bioD"/>
    <property type="match status" value="1"/>
</dbReference>
<dbReference type="PANTHER" id="PTHR43210">
    <property type="entry name" value="DETHIOBIOTIN SYNTHETASE"/>
    <property type="match status" value="1"/>
</dbReference>
<dbReference type="PANTHER" id="PTHR43210:SF5">
    <property type="entry name" value="DETHIOBIOTIN SYNTHETASE"/>
    <property type="match status" value="1"/>
</dbReference>
<dbReference type="Pfam" id="PF13500">
    <property type="entry name" value="AAA_26"/>
    <property type="match status" value="1"/>
</dbReference>
<dbReference type="PIRSF" id="PIRSF006755">
    <property type="entry name" value="DTB_synth"/>
    <property type="match status" value="1"/>
</dbReference>
<dbReference type="SUPFAM" id="SSF52540">
    <property type="entry name" value="P-loop containing nucleoside triphosphate hydrolases"/>
    <property type="match status" value="1"/>
</dbReference>
<keyword id="KW-0067">ATP-binding</keyword>
<keyword id="KW-0093">Biotin biosynthesis</keyword>
<keyword id="KW-0963">Cytoplasm</keyword>
<keyword id="KW-0436">Ligase</keyword>
<keyword id="KW-0460">Magnesium</keyword>
<keyword id="KW-0479">Metal-binding</keyword>
<keyword id="KW-0547">Nucleotide-binding</keyword>
<keyword id="KW-1185">Reference proteome</keyword>
<feature type="chain" id="PRO_1000133206" description="ATP-dependent dethiobiotin synthetase BioD">
    <location>
        <begin position="1"/>
        <end position="219"/>
    </location>
</feature>
<feature type="active site" evidence="1">
    <location>
        <position position="37"/>
    </location>
</feature>
<feature type="binding site" evidence="1">
    <location>
        <begin position="12"/>
        <end position="17"/>
    </location>
    <ligand>
        <name>ATP</name>
        <dbReference type="ChEBI" id="CHEBI:30616"/>
    </ligand>
</feature>
<feature type="binding site" evidence="1">
    <location>
        <position position="16"/>
    </location>
    <ligand>
        <name>Mg(2+)</name>
        <dbReference type="ChEBI" id="CHEBI:18420"/>
    </ligand>
</feature>
<feature type="binding site" evidence="1">
    <location>
        <position position="41"/>
    </location>
    <ligand>
        <name>substrate</name>
    </ligand>
</feature>
<feature type="binding site" evidence="1">
    <location>
        <position position="52"/>
    </location>
    <ligand>
        <name>ATP</name>
        <dbReference type="ChEBI" id="CHEBI:30616"/>
    </ligand>
</feature>
<feature type="binding site" evidence="1">
    <location>
        <position position="52"/>
    </location>
    <ligand>
        <name>Mg(2+)</name>
        <dbReference type="ChEBI" id="CHEBI:18420"/>
    </ligand>
</feature>
<feature type="binding site" evidence="1">
    <location>
        <begin position="115"/>
        <end position="118"/>
    </location>
    <ligand>
        <name>ATP</name>
        <dbReference type="ChEBI" id="CHEBI:30616"/>
    </ligand>
</feature>
<feature type="binding site" evidence="1">
    <location>
        <position position="115"/>
    </location>
    <ligand>
        <name>Mg(2+)</name>
        <dbReference type="ChEBI" id="CHEBI:18420"/>
    </ligand>
</feature>
<feature type="binding site" evidence="1">
    <location>
        <begin position="175"/>
        <end position="176"/>
    </location>
    <ligand>
        <name>ATP</name>
        <dbReference type="ChEBI" id="CHEBI:30616"/>
    </ligand>
</feature>
<protein>
    <recommendedName>
        <fullName evidence="1">ATP-dependent dethiobiotin synthetase BioD</fullName>
        <ecNumber evidence="1">6.3.3.3</ecNumber>
    </recommendedName>
    <alternativeName>
        <fullName evidence="1">DTB synthetase</fullName>
        <shortName evidence="1">DTBS</shortName>
    </alternativeName>
    <alternativeName>
        <fullName evidence="1">Dethiobiotin synthase</fullName>
    </alternativeName>
</protein>
<proteinExistence type="inferred from homology"/>
<accession>B8GVE1</accession>
<gene>
    <name evidence="1" type="primary">bioD</name>
    <name type="ordered locus">CCNA_01646</name>
</gene>
<reference key="1">
    <citation type="journal article" date="2010" name="J. Bacteriol.">
        <title>The genetic basis of laboratory adaptation in Caulobacter crescentus.</title>
        <authorList>
            <person name="Marks M.E."/>
            <person name="Castro-Rojas C.M."/>
            <person name="Teiling C."/>
            <person name="Du L."/>
            <person name="Kapatral V."/>
            <person name="Walunas T.L."/>
            <person name="Crosson S."/>
        </authorList>
    </citation>
    <scope>NUCLEOTIDE SEQUENCE [LARGE SCALE GENOMIC DNA]</scope>
    <source>
        <strain>NA1000 / CB15N</strain>
    </source>
</reference>
<evidence type="ECO:0000255" key="1">
    <source>
        <dbReference type="HAMAP-Rule" id="MF_00336"/>
    </source>
</evidence>
<name>BIOD_CAUVN</name>
<sequence length="219" mass="22895">MKSLFVAGTGTDLGKTHVACALLEAARAGGLSVDAFKPVVSGFDPDAPDDSDPARLARALGRPEAWTDVSPRRYRAPLAPNIAARLEGDTLQMDDLITDCREWLIGRDVGLALIEGAGGVMSPMTDEATNLDLMVALGLPVLLVAGSYLGTASHLLTALEVLRARGLSIAAIVVSESLDAPDLDQTLGLLRAFEHQATILSAPRAGNWDAGSLVDLLMA</sequence>